<accession>B2UU76</accession>
<evidence type="ECO:0000255" key="1">
    <source>
        <dbReference type="HAMAP-Rule" id="MF_00223"/>
    </source>
</evidence>
<reference key="1">
    <citation type="submission" date="2008-05" db="EMBL/GenBank/DDBJ databases">
        <title>Genome sequence of Helicobacter pylori from the remote Amazon: traces of Asian ancestry of the first Americans.</title>
        <authorList>
            <person name="Kersulyte D."/>
            <person name="Kalia A."/>
            <person name="Gilman R.H."/>
            <person name="Berg D.E."/>
        </authorList>
    </citation>
    <scope>NUCLEOTIDE SEQUENCE [LARGE SCALE GENOMIC DNA]</scope>
    <source>
        <strain>Shi470</strain>
    </source>
</reference>
<gene>
    <name evidence="1" type="primary">folE</name>
    <name type="ordered locus">HPSH_04890</name>
</gene>
<sequence length="180" mass="20841">MENFFNQFFENIGEDKNREGLKETPKRVQELWKFLYKGYKEDPKVALKSAYFQGVCDEMIVAQNIEFYSTCEHHLLPFLGNISLGYIPKEKIVGISAIAKLIEIYSRRLQIQERLTTQIAETFDEIIEPRGVIVVCEAKHLCMSMQGVQKQNAIIKTSVLKGLFKKDPKTRAEFMQLLKS</sequence>
<protein>
    <recommendedName>
        <fullName evidence="1">GTP cyclohydrolase 1</fullName>
        <ecNumber evidence="1">3.5.4.16</ecNumber>
    </recommendedName>
    <alternativeName>
        <fullName evidence="1">GTP cyclohydrolase I</fullName>
        <shortName evidence="1">GTP-CH-I</shortName>
    </alternativeName>
</protein>
<name>GCH1_HELPS</name>
<keyword id="KW-0342">GTP-binding</keyword>
<keyword id="KW-0378">Hydrolase</keyword>
<keyword id="KW-0479">Metal-binding</keyword>
<keyword id="KW-0547">Nucleotide-binding</keyword>
<keyword id="KW-0554">One-carbon metabolism</keyword>
<keyword id="KW-0862">Zinc</keyword>
<proteinExistence type="inferred from homology"/>
<organism>
    <name type="scientific">Helicobacter pylori (strain Shi470)</name>
    <dbReference type="NCBI Taxonomy" id="512562"/>
    <lineage>
        <taxon>Bacteria</taxon>
        <taxon>Pseudomonadati</taxon>
        <taxon>Campylobacterota</taxon>
        <taxon>Epsilonproteobacteria</taxon>
        <taxon>Campylobacterales</taxon>
        <taxon>Helicobacteraceae</taxon>
        <taxon>Helicobacter</taxon>
    </lineage>
</organism>
<feature type="chain" id="PRO_1000100177" description="GTP cyclohydrolase 1">
    <location>
        <begin position="1"/>
        <end position="180"/>
    </location>
</feature>
<feature type="binding site" evidence="1">
    <location>
        <position position="71"/>
    </location>
    <ligand>
        <name>Zn(2+)</name>
        <dbReference type="ChEBI" id="CHEBI:29105"/>
    </ligand>
</feature>
<feature type="binding site" evidence="1">
    <location>
        <position position="74"/>
    </location>
    <ligand>
        <name>Zn(2+)</name>
        <dbReference type="ChEBI" id="CHEBI:29105"/>
    </ligand>
</feature>
<feature type="binding site" evidence="1">
    <location>
        <position position="142"/>
    </location>
    <ligand>
        <name>Zn(2+)</name>
        <dbReference type="ChEBI" id="CHEBI:29105"/>
    </ligand>
</feature>
<comment type="catalytic activity">
    <reaction evidence="1">
        <text>GTP + H2O = 7,8-dihydroneopterin 3'-triphosphate + formate + H(+)</text>
        <dbReference type="Rhea" id="RHEA:17473"/>
        <dbReference type="ChEBI" id="CHEBI:15377"/>
        <dbReference type="ChEBI" id="CHEBI:15378"/>
        <dbReference type="ChEBI" id="CHEBI:15740"/>
        <dbReference type="ChEBI" id="CHEBI:37565"/>
        <dbReference type="ChEBI" id="CHEBI:58462"/>
        <dbReference type="EC" id="3.5.4.16"/>
    </reaction>
</comment>
<comment type="pathway">
    <text evidence="1">Cofactor biosynthesis; 7,8-dihydroneopterin triphosphate biosynthesis; 7,8-dihydroneopterin triphosphate from GTP: step 1/1.</text>
</comment>
<comment type="subunit">
    <text evidence="1">Homomer.</text>
</comment>
<comment type="similarity">
    <text evidence="1">Belongs to the GTP cyclohydrolase I family.</text>
</comment>
<dbReference type="EC" id="3.5.4.16" evidence="1"/>
<dbReference type="EMBL" id="CP001072">
    <property type="protein sequence ID" value="ACD48408.1"/>
    <property type="molecule type" value="Genomic_DNA"/>
</dbReference>
<dbReference type="RefSeq" id="WP_000426951.1">
    <property type="nucleotide sequence ID" value="NC_010698.2"/>
</dbReference>
<dbReference type="SMR" id="B2UU76"/>
<dbReference type="GeneID" id="93237296"/>
<dbReference type="KEGG" id="hps:HPSH_04890"/>
<dbReference type="HOGENOM" id="CLU_049768_3_4_7"/>
<dbReference type="UniPathway" id="UPA00848">
    <property type="reaction ID" value="UER00151"/>
</dbReference>
<dbReference type="GO" id="GO:0005737">
    <property type="term" value="C:cytoplasm"/>
    <property type="evidence" value="ECO:0007669"/>
    <property type="project" value="TreeGrafter"/>
</dbReference>
<dbReference type="GO" id="GO:0005525">
    <property type="term" value="F:GTP binding"/>
    <property type="evidence" value="ECO:0007669"/>
    <property type="project" value="UniProtKB-KW"/>
</dbReference>
<dbReference type="GO" id="GO:0003934">
    <property type="term" value="F:GTP cyclohydrolase I activity"/>
    <property type="evidence" value="ECO:0007669"/>
    <property type="project" value="UniProtKB-UniRule"/>
</dbReference>
<dbReference type="GO" id="GO:0008270">
    <property type="term" value="F:zinc ion binding"/>
    <property type="evidence" value="ECO:0007669"/>
    <property type="project" value="UniProtKB-UniRule"/>
</dbReference>
<dbReference type="GO" id="GO:0006730">
    <property type="term" value="P:one-carbon metabolic process"/>
    <property type="evidence" value="ECO:0007669"/>
    <property type="project" value="UniProtKB-UniRule"/>
</dbReference>
<dbReference type="GO" id="GO:0006729">
    <property type="term" value="P:tetrahydrobiopterin biosynthetic process"/>
    <property type="evidence" value="ECO:0007669"/>
    <property type="project" value="TreeGrafter"/>
</dbReference>
<dbReference type="GO" id="GO:0046654">
    <property type="term" value="P:tetrahydrofolate biosynthetic process"/>
    <property type="evidence" value="ECO:0007669"/>
    <property type="project" value="UniProtKB-UniRule"/>
</dbReference>
<dbReference type="FunFam" id="3.30.1130.10:FF:000001">
    <property type="entry name" value="GTP cyclohydrolase 1"/>
    <property type="match status" value="1"/>
</dbReference>
<dbReference type="Gene3D" id="1.10.286.10">
    <property type="match status" value="1"/>
</dbReference>
<dbReference type="Gene3D" id="3.30.1130.10">
    <property type="match status" value="1"/>
</dbReference>
<dbReference type="HAMAP" id="MF_00223">
    <property type="entry name" value="FolE"/>
    <property type="match status" value="1"/>
</dbReference>
<dbReference type="InterPro" id="IPR043133">
    <property type="entry name" value="GTP-CH-I_C/QueF"/>
</dbReference>
<dbReference type="InterPro" id="IPR043134">
    <property type="entry name" value="GTP-CH-I_N"/>
</dbReference>
<dbReference type="InterPro" id="IPR001474">
    <property type="entry name" value="GTP_CycHdrlase_I"/>
</dbReference>
<dbReference type="InterPro" id="IPR018234">
    <property type="entry name" value="GTP_CycHdrlase_I_CS"/>
</dbReference>
<dbReference type="InterPro" id="IPR020602">
    <property type="entry name" value="GTP_CycHdrlase_I_dom"/>
</dbReference>
<dbReference type="NCBIfam" id="TIGR00063">
    <property type="entry name" value="folE"/>
    <property type="match status" value="1"/>
</dbReference>
<dbReference type="NCBIfam" id="NF006825">
    <property type="entry name" value="PRK09347.1-2"/>
    <property type="match status" value="1"/>
</dbReference>
<dbReference type="NCBIfam" id="NF006826">
    <property type="entry name" value="PRK09347.1-3"/>
    <property type="match status" value="1"/>
</dbReference>
<dbReference type="PANTHER" id="PTHR11109:SF7">
    <property type="entry name" value="GTP CYCLOHYDROLASE 1"/>
    <property type="match status" value="1"/>
</dbReference>
<dbReference type="PANTHER" id="PTHR11109">
    <property type="entry name" value="GTP CYCLOHYDROLASE I"/>
    <property type="match status" value="1"/>
</dbReference>
<dbReference type="Pfam" id="PF01227">
    <property type="entry name" value="GTP_cyclohydroI"/>
    <property type="match status" value="1"/>
</dbReference>
<dbReference type="SUPFAM" id="SSF55620">
    <property type="entry name" value="Tetrahydrobiopterin biosynthesis enzymes-like"/>
    <property type="match status" value="1"/>
</dbReference>
<dbReference type="PROSITE" id="PS00859">
    <property type="entry name" value="GTP_CYCLOHYDROL_1_1"/>
    <property type="match status" value="1"/>
</dbReference>
<dbReference type="PROSITE" id="PS00860">
    <property type="entry name" value="GTP_CYCLOHYDROL_1_2"/>
    <property type="match status" value="1"/>
</dbReference>